<gene>
    <name evidence="1" type="primary">gluQ</name>
    <name type="ordered locus">VC_0595</name>
</gene>
<comment type="function">
    <text evidence="1">Catalyzes the tRNA-independent activation of glutamate in presence of ATP and the subsequent transfer of glutamate onto a tRNA(Asp). Glutamate is transferred on the 2-amino-5-(4,5-dihydroxy-2-cyclopenten-1-yl) moiety of the queuosine in the wobble position of the QUC anticodon.</text>
</comment>
<comment type="cofactor">
    <cofactor evidence="1">
        <name>Zn(2+)</name>
        <dbReference type="ChEBI" id="CHEBI:29105"/>
    </cofactor>
    <text evidence="1">Binds 1 zinc ion per subunit.</text>
</comment>
<comment type="similarity">
    <text evidence="1">Belongs to the class-I aminoacyl-tRNA synthetase family. GluQ subfamily.</text>
</comment>
<accession>Q9KUC7</accession>
<keyword id="KW-0030">Aminoacyl-tRNA synthetase</keyword>
<keyword id="KW-0067">ATP-binding</keyword>
<keyword id="KW-0436">Ligase</keyword>
<keyword id="KW-0479">Metal-binding</keyword>
<keyword id="KW-0547">Nucleotide-binding</keyword>
<keyword id="KW-1185">Reference proteome</keyword>
<keyword id="KW-0862">Zinc</keyword>
<protein>
    <recommendedName>
        <fullName evidence="1">Glutamyl-Q tRNA(Asp) synthetase</fullName>
        <shortName evidence="1">Glu-Q-RSs</shortName>
        <ecNumber evidence="1">6.1.1.-</ecNumber>
    </recommendedName>
</protein>
<sequence length="304" mass="33988">MHLKGKSPMNYIGRFAPSPSGPLHFGSLIAALGSYFQAKAQQGTWLVRIEDLDPPREMPGAAAHILRTLEAYRLHWDGTVVYQSQRHALYQDQIDAWLSTGQAYYCQCTRKAIKAMGGFYNGHCKIHPPARQQDCSIRLRMDNQVQQFIDLKHGTITIPKALAEEDFIIKRRDGLFAYNLAVVLDDIDQGVTQVVRGADLIEPTGRQISLYHTLKQKPVSYLHLPLAMDGNGNKLSKQNHAPAIDPTAPRQTISHAMQFLGFTLPTDFSDASAEQMLAWGCQHWQVSQLPEAIEITPRFSNGPA</sequence>
<evidence type="ECO:0000255" key="1">
    <source>
        <dbReference type="HAMAP-Rule" id="MF_01428"/>
    </source>
</evidence>
<reference key="1">
    <citation type="journal article" date="2000" name="Nature">
        <title>DNA sequence of both chromosomes of the cholera pathogen Vibrio cholerae.</title>
        <authorList>
            <person name="Heidelberg J.F."/>
            <person name="Eisen J.A."/>
            <person name="Nelson W.C."/>
            <person name="Clayton R.A."/>
            <person name="Gwinn M.L."/>
            <person name="Dodson R.J."/>
            <person name="Haft D.H."/>
            <person name="Hickey E.K."/>
            <person name="Peterson J.D."/>
            <person name="Umayam L.A."/>
            <person name="Gill S.R."/>
            <person name="Nelson K.E."/>
            <person name="Read T.D."/>
            <person name="Tettelin H."/>
            <person name="Richardson D.L."/>
            <person name="Ermolaeva M.D."/>
            <person name="Vamathevan J.J."/>
            <person name="Bass S."/>
            <person name="Qin H."/>
            <person name="Dragoi I."/>
            <person name="Sellers P."/>
            <person name="McDonald L.A."/>
            <person name="Utterback T.R."/>
            <person name="Fleischmann R.D."/>
            <person name="Nierman W.C."/>
            <person name="White O."/>
            <person name="Salzberg S.L."/>
            <person name="Smith H.O."/>
            <person name="Colwell R.R."/>
            <person name="Mekalanos J.J."/>
            <person name="Venter J.C."/>
            <person name="Fraser C.M."/>
        </authorList>
    </citation>
    <scope>NUCLEOTIDE SEQUENCE [LARGE SCALE GENOMIC DNA]</scope>
    <source>
        <strain>ATCC 39315 / El Tor Inaba N16961</strain>
    </source>
</reference>
<dbReference type="EC" id="6.1.1.-" evidence="1"/>
<dbReference type="EMBL" id="AE003852">
    <property type="protein sequence ID" value="AAF93762.1"/>
    <property type="molecule type" value="Genomic_DNA"/>
</dbReference>
<dbReference type="PIR" id="D82304">
    <property type="entry name" value="D82304"/>
</dbReference>
<dbReference type="RefSeq" id="NP_230245.1">
    <property type="nucleotide sequence ID" value="NC_002505.1"/>
</dbReference>
<dbReference type="SMR" id="Q9KUC7"/>
<dbReference type="STRING" id="243277.VC_0595"/>
<dbReference type="EnsemblBacteria" id="AAF93762">
    <property type="protein sequence ID" value="AAF93762"/>
    <property type="gene ID" value="VC_0595"/>
</dbReference>
<dbReference type="KEGG" id="vch:VC_0595"/>
<dbReference type="PATRIC" id="fig|243277.26.peg.567"/>
<dbReference type="eggNOG" id="COG0008">
    <property type="taxonomic scope" value="Bacteria"/>
</dbReference>
<dbReference type="HOGENOM" id="CLU_015768_0_1_6"/>
<dbReference type="Proteomes" id="UP000000584">
    <property type="component" value="Chromosome 1"/>
</dbReference>
<dbReference type="GO" id="GO:0005829">
    <property type="term" value="C:cytosol"/>
    <property type="evidence" value="ECO:0000318"/>
    <property type="project" value="GO_Central"/>
</dbReference>
<dbReference type="GO" id="GO:0005524">
    <property type="term" value="F:ATP binding"/>
    <property type="evidence" value="ECO:0007669"/>
    <property type="project" value="UniProtKB-KW"/>
</dbReference>
<dbReference type="GO" id="GO:0004818">
    <property type="term" value="F:glutamate-tRNA ligase activity"/>
    <property type="evidence" value="ECO:0000318"/>
    <property type="project" value="GO_Central"/>
</dbReference>
<dbReference type="GO" id="GO:0008270">
    <property type="term" value="F:zinc ion binding"/>
    <property type="evidence" value="ECO:0007669"/>
    <property type="project" value="UniProtKB-UniRule"/>
</dbReference>
<dbReference type="GO" id="GO:0006424">
    <property type="term" value="P:glutamyl-tRNA aminoacylation"/>
    <property type="evidence" value="ECO:0000318"/>
    <property type="project" value="GO_Central"/>
</dbReference>
<dbReference type="GO" id="GO:0006400">
    <property type="term" value="P:tRNA modification"/>
    <property type="evidence" value="ECO:0007669"/>
    <property type="project" value="InterPro"/>
</dbReference>
<dbReference type="FunFam" id="3.40.50.620:FF:000093">
    <property type="entry name" value="Glutamyl-Q tRNA(Asp) synthetase"/>
    <property type="match status" value="1"/>
</dbReference>
<dbReference type="Gene3D" id="3.90.800.10">
    <property type="entry name" value="Glutamyl-tRNA Synthetase, Domain 3"/>
    <property type="match status" value="1"/>
</dbReference>
<dbReference type="Gene3D" id="3.40.50.620">
    <property type="entry name" value="HUPs"/>
    <property type="match status" value="1"/>
</dbReference>
<dbReference type="HAMAP" id="MF_01428">
    <property type="entry name" value="Glu_Q_tRNA_synth"/>
    <property type="match status" value="1"/>
</dbReference>
<dbReference type="InterPro" id="IPR022380">
    <property type="entry name" value="Glu-Q_tRNA(Asp)_Synthase"/>
</dbReference>
<dbReference type="InterPro" id="IPR000924">
    <property type="entry name" value="Glu/Gln-tRNA-synth"/>
</dbReference>
<dbReference type="InterPro" id="IPR020058">
    <property type="entry name" value="Glu/Gln-tRNA-synth_Ib_cat-dom"/>
</dbReference>
<dbReference type="InterPro" id="IPR049940">
    <property type="entry name" value="GluQ/Sye"/>
</dbReference>
<dbReference type="InterPro" id="IPR014729">
    <property type="entry name" value="Rossmann-like_a/b/a_fold"/>
</dbReference>
<dbReference type="NCBIfam" id="NF004314">
    <property type="entry name" value="PRK05710.1-3"/>
    <property type="match status" value="1"/>
</dbReference>
<dbReference type="NCBIfam" id="TIGR03838">
    <property type="entry name" value="queuosine_YadB"/>
    <property type="match status" value="1"/>
</dbReference>
<dbReference type="PANTHER" id="PTHR43311">
    <property type="entry name" value="GLUTAMATE--TRNA LIGASE"/>
    <property type="match status" value="1"/>
</dbReference>
<dbReference type="PANTHER" id="PTHR43311:SF1">
    <property type="entry name" value="GLUTAMYL-Q TRNA(ASP) SYNTHETASE"/>
    <property type="match status" value="1"/>
</dbReference>
<dbReference type="Pfam" id="PF00749">
    <property type="entry name" value="tRNA-synt_1c"/>
    <property type="match status" value="1"/>
</dbReference>
<dbReference type="PRINTS" id="PR00987">
    <property type="entry name" value="TRNASYNTHGLU"/>
</dbReference>
<dbReference type="SUPFAM" id="SSF52374">
    <property type="entry name" value="Nucleotidylyl transferase"/>
    <property type="match status" value="1"/>
</dbReference>
<proteinExistence type="inferred from homology"/>
<name>GLUQ_VIBCH</name>
<feature type="chain" id="PRO_0000208331" description="Glutamyl-Q tRNA(Asp) synthetase">
    <location>
        <begin position="1"/>
        <end position="304"/>
    </location>
</feature>
<feature type="short sequence motif" description="'HIGH' region">
    <location>
        <begin position="17"/>
        <end position="27"/>
    </location>
</feature>
<feature type="short sequence motif" description="'KMSKS' region">
    <location>
        <begin position="234"/>
        <end position="238"/>
    </location>
</feature>
<feature type="binding site" evidence="1">
    <location>
        <begin position="14"/>
        <end position="18"/>
    </location>
    <ligand>
        <name>L-glutamate</name>
        <dbReference type="ChEBI" id="CHEBI:29985"/>
    </ligand>
</feature>
<feature type="binding site" evidence="1">
    <location>
        <position position="50"/>
    </location>
    <ligand>
        <name>L-glutamate</name>
        <dbReference type="ChEBI" id="CHEBI:29985"/>
    </ligand>
</feature>
<feature type="binding site" evidence="1">
    <location>
        <position position="106"/>
    </location>
    <ligand>
        <name>Zn(2+)</name>
        <dbReference type="ChEBI" id="CHEBI:29105"/>
    </ligand>
</feature>
<feature type="binding site" evidence="1">
    <location>
        <position position="108"/>
    </location>
    <ligand>
        <name>Zn(2+)</name>
        <dbReference type="ChEBI" id="CHEBI:29105"/>
    </ligand>
</feature>
<feature type="binding site" evidence="1">
    <location>
        <position position="120"/>
    </location>
    <ligand>
        <name>Zn(2+)</name>
        <dbReference type="ChEBI" id="CHEBI:29105"/>
    </ligand>
</feature>
<feature type="binding site" evidence="1">
    <location>
        <position position="124"/>
    </location>
    <ligand>
        <name>Zn(2+)</name>
        <dbReference type="ChEBI" id="CHEBI:29105"/>
    </ligand>
</feature>
<feature type="binding site" evidence="1">
    <location>
        <position position="178"/>
    </location>
    <ligand>
        <name>L-glutamate</name>
        <dbReference type="ChEBI" id="CHEBI:29985"/>
    </ligand>
</feature>
<feature type="binding site" evidence="1">
    <location>
        <position position="196"/>
    </location>
    <ligand>
        <name>L-glutamate</name>
        <dbReference type="ChEBI" id="CHEBI:29985"/>
    </ligand>
</feature>
<feature type="binding site" evidence="1">
    <location>
        <position position="237"/>
    </location>
    <ligand>
        <name>ATP</name>
        <dbReference type="ChEBI" id="CHEBI:30616"/>
    </ligand>
</feature>
<organism>
    <name type="scientific">Vibrio cholerae serotype O1 (strain ATCC 39315 / El Tor Inaba N16961)</name>
    <dbReference type="NCBI Taxonomy" id="243277"/>
    <lineage>
        <taxon>Bacteria</taxon>
        <taxon>Pseudomonadati</taxon>
        <taxon>Pseudomonadota</taxon>
        <taxon>Gammaproteobacteria</taxon>
        <taxon>Vibrionales</taxon>
        <taxon>Vibrionaceae</taxon>
        <taxon>Vibrio</taxon>
    </lineage>
</organism>